<comment type="function">
    <text evidence="1">Specifically methylates the guanine in position 2445 (m2G2445) and the guanine in position 2069 (m7G2069) of 23S rRNA.</text>
</comment>
<comment type="catalytic activity">
    <reaction evidence="1">
        <text>guanosine(2445) in 23S rRNA + S-adenosyl-L-methionine = N(2)-methylguanosine(2445) in 23S rRNA + S-adenosyl-L-homocysteine + H(+)</text>
        <dbReference type="Rhea" id="RHEA:42740"/>
        <dbReference type="Rhea" id="RHEA-COMP:10215"/>
        <dbReference type="Rhea" id="RHEA-COMP:10216"/>
        <dbReference type="ChEBI" id="CHEBI:15378"/>
        <dbReference type="ChEBI" id="CHEBI:57856"/>
        <dbReference type="ChEBI" id="CHEBI:59789"/>
        <dbReference type="ChEBI" id="CHEBI:74269"/>
        <dbReference type="ChEBI" id="CHEBI:74481"/>
        <dbReference type="EC" id="2.1.1.173"/>
    </reaction>
</comment>
<comment type="catalytic activity">
    <reaction evidence="1">
        <text>guanosine(2069) in 23S rRNA + S-adenosyl-L-methionine = N(2)-methylguanosine(2069) in 23S rRNA + S-adenosyl-L-homocysteine + H(+)</text>
        <dbReference type="Rhea" id="RHEA:43772"/>
        <dbReference type="Rhea" id="RHEA-COMP:10688"/>
        <dbReference type="Rhea" id="RHEA-COMP:10689"/>
        <dbReference type="ChEBI" id="CHEBI:15378"/>
        <dbReference type="ChEBI" id="CHEBI:57856"/>
        <dbReference type="ChEBI" id="CHEBI:59789"/>
        <dbReference type="ChEBI" id="CHEBI:74269"/>
        <dbReference type="ChEBI" id="CHEBI:74481"/>
        <dbReference type="EC" id="2.1.1.264"/>
    </reaction>
</comment>
<comment type="subcellular location">
    <subcellularLocation>
        <location evidence="1">Cytoplasm</location>
    </subcellularLocation>
</comment>
<comment type="similarity">
    <text evidence="1">Belongs to the methyltransferase superfamily. RlmKL family.</text>
</comment>
<evidence type="ECO:0000255" key="1">
    <source>
        <dbReference type="HAMAP-Rule" id="MF_01858"/>
    </source>
</evidence>
<proteinExistence type="inferred from homology"/>
<name>RLMKL_METCA</name>
<dbReference type="EC" id="2.1.1.173" evidence="1"/>
<dbReference type="EC" id="2.1.1.264" evidence="1"/>
<dbReference type="EMBL" id="AE017282">
    <property type="protein sequence ID" value="AAU93142.1"/>
    <property type="molecule type" value="Genomic_DNA"/>
</dbReference>
<dbReference type="RefSeq" id="WP_010960050.1">
    <property type="nucleotide sequence ID" value="NC_002977.6"/>
</dbReference>
<dbReference type="SMR" id="Q60AX5"/>
<dbReference type="STRING" id="243233.MCA0712"/>
<dbReference type="GeneID" id="88223032"/>
<dbReference type="KEGG" id="mca:MCA0712"/>
<dbReference type="eggNOG" id="COG0116">
    <property type="taxonomic scope" value="Bacteria"/>
</dbReference>
<dbReference type="eggNOG" id="COG1092">
    <property type="taxonomic scope" value="Bacteria"/>
</dbReference>
<dbReference type="HOGENOM" id="CLU_014042_2_0_6"/>
<dbReference type="Proteomes" id="UP000006821">
    <property type="component" value="Chromosome"/>
</dbReference>
<dbReference type="GO" id="GO:0005737">
    <property type="term" value="C:cytoplasm"/>
    <property type="evidence" value="ECO:0007669"/>
    <property type="project" value="UniProtKB-SubCell"/>
</dbReference>
<dbReference type="GO" id="GO:0052915">
    <property type="term" value="F:23S rRNA (guanine(2445)-N(2))-methyltransferase activity"/>
    <property type="evidence" value="ECO:0007669"/>
    <property type="project" value="UniProtKB-UniRule"/>
</dbReference>
<dbReference type="GO" id="GO:0003723">
    <property type="term" value="F:RNA binding"/>
    <property type="evidence" value="ECO:0007669"/>
    <property type="project" value="UniProtKB-KW"/>
</dbReference>
<dbReference type="GO" id="GO:0070043">
    <property type="term" value="F:rRNA (guanine-N7-)-methyltransferase activity"/>
    <property type="evidence" value="ECO:0007669"/>
    <property type="project" value="UniProtKB-UniRule"/>
</dbReference>
<dbReference type="CDD" id="cd02440">
    <property type="entry name" value="AdoMet_MTases"/>
    <property type="match status" value="1"/>
</dbReference>
<dbReference type="CDD" id="cd11715">
    <property type="entry name" value="THUMP_AdoMetMT"/>
    <property type="match status" value="1"/>
</dbReference>
<dbReference type="Gene3D" id="3.30.2130.30">
    <property type="match status" value="1"/>
</dbReference>
<dbReference type="Gene3D" id="3.30.750.80">
    <property type="entry name" value="RNA methyltransferase domain (HRMD) like"/>
    <property type="match status" value="1"/>
</dbReference>
<dbReference type="Gene3D" id="3.40.50.150">
    <property type="entry name" value="Vaccinia Virus protein VP39"/>
    <property type="match status" value="2"/>
</dbReference>
<dbReference type="HAMAP" id="MF_01858">
    <property type="entry name" value="23SrRNA_methyltr_KL"/>
    <property type="match status" value="1"/>
</dbReference>
<dbReference type="InterPro" id="IPR017244">
    <property type="entry name" value="23SrRNA_methyltr_KL"/>
</dbReference>
<dbReference type="InterPro" id="IPR002052">
    <property type="entry name" value="DNA_methylase_N6_adenine_CS"/>
</dbReference>
<dbReference type="InterPro" id="IPR000241">
    <property type="entry name" value="RlmKL-like_Mtase"/>
</dbReference>
<dbReference type="InterPro" id="IPR054170">
    <property type="entry name" value="RlmL_1st"/>
</dbReference>
<dbReference type="InterPro" id="IPR019614">
    <property type="entry name" value="SAM-dep_methyl-trfase"/>
</dbReference>
<dbReference type="InterPro" id="IPR029063">
    <property type="entry name" value="SAM-dependent_MTases_sf"/>
</dbReference>
<dbReference type="InterPro" id="IPR004114">
    <property type="entry name" value="THUMP_dom"/>
</dbReference>
<dbReference type="NCBIfam" id="NF008748">
    <property type="entry name" value="PRK11783.1"/>
    <property type="match status" value="1"/>
</dbReference>
<dbReference type="PANTHER" id="PTHR47313">
    <property type="entry name" value="RIBOSOMAL RNA LARGE SUBUNIT METHYLTRANSFERASE K/L"/>
    <property type="match status" value="1"/>
</dbReference>
<dbReference type="PANTHER" id="PTHR47313:SF1">
    <property type="entry name" value="RIBOSOMAL RNA LARGE SUBUNIT METHYLTRANSFERASE K_L"/>
    <property type="match status" value="1"/>
</dbReference>
<dbReference type="Pfam" id="PF10672">
    <property type="entry name" value="Methyltrans_SAM"/>
    <property type="match status" value="1"/>
</dbReference>
<dbReference type="Pfam" id="PF22020">
    <property type="entry name" value="RlmL_1st"/>
    <property type="match status" value="1"/>
</dbReference>
<dbReference type="Pfam" id="PF02926">
    <property type="entry name" value="THUMP"/>
    <property type="match status" value="1"/>
</dbReference>
<dbReference type="Pfam" id="PF01170">
    <property type="entry name" value="UPF0020"/>
    <property type="match status" value="1"/>
</dbReference>
<dbReference type="PIRSF" id="PIRSF037618">
    <property type="entry name" value="RNA_Mtase_bacteria_prd"/>
    <property type="match status" value="1"/>
</dbReference>
<dbReference type="SMART" id="SM00981">
    <property type="entry name" value="THUMP"/>
    <property type="match status" value="1"/>
</dbReference>
<dbReference type="SUPFAM" id="SSF53335">
    <property type="entry name" value="S-adenosyl-L-methionine-dependent methyltransferases"/>
    <property type="match status" value="2"/>
</dbReference>
<dbReference type="PROSITE" id="PS51165">
    <property type="entry name" value="THUMP"/>
    <property type="match status" value="1"/>
</dbReference>
<reference key="1">
    <citation type="journal article" date="2004" name="PLoS Biol.">
        <title>Genomic insights into methanotrophy: the complete genome sequence of Methylococcus capsulatus (Bath).</title>
        <authorList>
            <person name="Ward N.L."/>
            <person name="Larsen O."/>
            <person name="Sakwa J."/>
            <person name="Bruseth L."/>
            <person name="Khouri H.M."/>
            <person name="Durkin A.S."/>
            <person name="Dimitrov G."/>
            <person name="Jiang L."/>
            <person name="Scanlan D."/>
            <person name="Kang K.H."/>
            <person name="Lewis M.R."/>
            <person name="Nelson K.E."/>
            <person name="Methe B.A."/>
            <person name="Wu M."/>
            <person name="Heidelberg J.F."/>
            <person name="Paulsen I.T."/>
            <person name="Fouts D.E."/>
            <person name="Ravel J."/>
            <person name="Tettelin H."/>
            <person name="Ren Q."/>
            <person name="Read T.D."/>
            <person name="DeBoy R.T."/>
            <person name="Seshadri R."/>
            <person name="Salzberg S.L."/>
            <person name="Jensen H.B."/>
            <person name="Birkeland N.K."/>
            <person name="Nelson W.C."/>
            <person name="Dodson R.J."/>
            <person name="Grindhaug S.H."/>
            <person name="Holt I.E."/>
            <person name="Eidhammer I."/>
            <person name="Jonasen I."/>
            <person name="Vanaken S."/>
            <person name="Utterback T.R."/>
            <person name="Feldblyum T.V."/>
            <person name="Fraser C.M."/>
            <person name="Lillehaug J.R."/>
            <person name="Eisen J.A."/>
        </authorList>
    </citation>
    <scope>NUCLEOTIDE SEQUENCE [LARGE SCALE GENOMIC DNA]</scope>
    <source>
        <strain>ATCC 33009 / NCIMB 11132 / Bath</strain>
    </source>
</reference>
<accession>Q60AX5</accession>
<organism>
    <name type="scientific">Methylococcus capsulatus (strain ATCC 33009 / NCIMB 11132 / Bath)</name>
    <dbReference type="NCBI Taxonomy" id="243233"/>
    <lineage>
        <taxon>Bacteria</taxon>
        <taxon>Pseudomonadati</taxon>
        <taxon>Pseudomonadota</taxon>
        <taxon>Gammaproteobacteria</taxon>
        <taxon>Methylococcales</taxon>
        <taxon>Methylococcaceae</taxon>
        <taxon>Methylococcus</taxon>
    </lineage>
</organism>
<feature type="chain" id="PRO_0000366777" description="Ribosomal RNA large subunit methyltransferase K/L">
    <location>
        <begin position="1"/>
        <end position="738"/>
    </location>
</feature>
<feature type="domain" description="THUMP" evidence="1">
    <location>
        <begin position="46"/>
        <end position="157"/>
    </location>
</feature>
<protein>
    <recommendedName>
        <fullName evidence="1">Ribosomal RNA large subunit methyltransferase K/L</fullName>
    </recommendedName>
    <domain>
        <recommendedName>
            <fullName evidence="1">23S rRNA m2G2445 methyltransferase</fullName>
            <ecNumber evidence="1">2.1.1.173</ecNumber>
        </recommendedName>
        <alternativeName>
            <fullName evidence="1">rRNA (guanine-N(2)-)-methyltransferase RlmL</fullName>
        </alternativeName>
    </domain>
    <domain>
        <recommendedName>
            <fullName evidence="1">23S rRNA m7G2069 methyltransferase</fullName>
            <ecNumber evidence="1">2.1.1.264</ecNumber>
        </recommendedName>
        <alternativeName>
            <fullName evidence="1">rRNA (guanine-N(7)-)-methyltransferase RlmK</fullName>
        </alternativeName>
    </domain>
</protein>
<sequence length="738" mass="83039">MPMTRDFFATAPKGLEPLLVRELDGLGAESIKETRAGVEFRGTLETAYRVCLWSRLANRILMSLDRFAAATPEALYDGVQRTDWGRHFGPGATLAVDFSSRRSAITHTLFGAQKVKDAIADQFLEHCGRRPSVRLERPDIRINVHLDADQAVIGLDLSGDSLHRRGYRTEAGPAPLKENLAAAVLIRAGWPDIAARGGSLIDPMCGSATLLIEGALLAADIAPGSFREYFGFLAWKGHDLELWRKLLTEARERAEAGLARLPPILGYDLDRRAIHLALDNIDRAGLRGRIHVERKVAADVRPKGRPGLVVVNPPYGERLGDVESLIPVYREFGETLQRHFRGWNAALLTGNFELAFQIGIRAGRYHTLYNGALECRLFLFDIAPERFFTPRSGVPETEGQKKLRQIVEKARRGAIPAEQSEMFANRLRKNLRNLGTWARRNGVSCYRLYDADLPEFAVAVDIYQGEKLWVHVQEYEAPASVDPAKAQSRLAGAVAMIPEVLEVPREQIFLKVRRRQKGDAQYVKQGQTAHFHVVEEGGWRFWVNFEDYLDTGLFLDHRITRGLIQQVARDRHFLNLFAYTGTATVYAAGGGAASTTTVDMSHTYLDWAGRNLALNGFGERDHLRIQADCLDWLEQAVDRRRRYGLIFLDPPTFSNSKRMTGSFDIQRDQGPLLKKVVSLLEPGGMLIFSTNRRRFRLDETALAGCAVEDVSRVTLPKDFERNPRIHACWRILAPDRQR</sequence>
<keyword id="KW-0963">Cytoplasm</keyword>
<keyword id="KW-0489">Methyltransferase</keyword>
<keyword id="KW-1185">Reference proteome</keyword>
<keyword id="KW-0694">RNA-binding</keyword>
<keyword id="KW-0698">rRNA processing</keyword>
<keyword id="KW-0949">S-adenosyl-L-methionine</keyword>
<keyword id="KW-0808">Transferase</keyword>
<gene>
    <name evidence="1" type="primary">rlmL</name>
    <name type="ordered locus">MCA0712</name>
</gene>